<comment type="function">
    <text evidence="1">Produces ATP from ADP in the presence of a proton gradient across the membrane. The catalytic sites are hosted primarily by the beta subunits (By similarity).</text>
</comment>
<comment type="catalytic activity">
    <reaction>
        <text>ATP + H2O + 4 H(+)(in) = ADP + phosphate + 5 H(+)(out)</text>
        <dbReference type="Rhea" id="RHEA:57720"/>
        <dbReference type="ChEBI" id="CHEBI:15377"/>
        <dbReference type="ChEBI" id="CHEBI:15378"/>
        <dbReference type="ChEBI" id="CHEBI:30616"/>
        <dbReference type="ChEBI" id="CHEBI:43474"/>
        <dbReference type="ChEBI" id="CHEBI:456216"/>
        <dbReference type="EC" id="7.1.2.2"/>
    </reaction>
</comment>
<comment type="subunit">
    <text evidence="1">F-type ATPases have 2 components, CF(1) - the catalytic core - and CF(0) - the membrane proton channel. CF(1) has five subunits: alpha(3), beta(3), gamma(1), delta(1), epsilon(1). CF(0) has four main subunits: a(1), b(1), b'(1) and c(9-12) (By similarity).</text>
</comment>
<comment type="subcellular location">
    <subcellularLocation>
        <location evidence="1">Plastid</location>
        <location evidence="1">Chloroplast thylakoid membrane</location>
        <topology evidence="1">Peripheral membrane protein</topology>
    </subcellularLocation>
</comment>
<comment type="similarity">
    <text evidence="2">Belongs to the ATPase alpha/beta chains family.</text>
</comment>
<geneLocation type="chloroplast"/>
<accession>O03077</accession>
<organism>
    <name type="scientific">Osmundastrum cinnamomeum</name>
    <name type="common">Cinnamon fern</name>
    <name type="synonym">Osmunda cinnamomea</name>
    <dbReference type="NCBI Taxonomy" id="3284"/>
    <lineage>
        <taxon>Eukaryota</taxon>
        <taxon>Viridiplantae</taxon>
        <taxon>Streptophyta</taxon>
        <taxon>Embryophyta</taxon>
        <taxon>Tracheophyta</taxon>
        <taxon>Polypodiopsida</taxon>
        <taxon>Polypodiidae</taxon>
        <taxon>Osmundales</taxon>
        <taxon>Osmundaceae</taxon>
        <taxon>Osmundastrum</taxon>
    </lineage>
</organism>
<reference key="1">
    <citation type="journal article" date="1997" name="Am. J. Bot.">
        <title>Evaluation of atpB nucleotide sequences for phylogenetic studies of ferns and other pteridophytes.</title>
        <authorList>
            <person name="Wolf P.G."/>
        </authorList>
    </citation>
    <scope>NUCLEOTIDE SEQUENCE [GENOMIC DNA]</scope>
</reference>
<dbReference type="EC" id="7.1.2.2"/>
<dbReference type="EMBL" id="U93827">
    <property type="protein sequence ID" value="AAB51735.1"/>
    <property type="molecule type" value="Genomic_DNA"/>
</dbReference>
<dbReference type="GO" id="GO:0009535">
    <property type="term" value="C:chloroplast thylakoid membrane"/>
    <property type="evidence" value="ECO:0007669"/>
    <property type="project" value="UniProtKB-SubCell"/>
</dbReference>
<dbReference type="GO" id="GO:0005739">
    <property type="term" value="C:mitochondrion"/>
    <property type="evidence" value="ECO:0007669"/>
    <property type="project" value="GOC"/>
</dbReference>
<dbReference type="GO" id="GO:0045259">
    <property type="term" value="C:proton-transporting ATP synthase complex"/>
    <property type="evidence" value="ECO:0007669"/>
    <property type="project" value="UniProtKB-KW"/>
</dbReference>
<dbReference type="GO" id="GO:0005524">
    <property type="term" value="F:ATP binding"/>
    <property type="evidence" value="ECO:0007669"/>
    <property type="project" value="UniProtKB-KW"/>
</dbReference>
<dbReference type="GO" id="GO:0046933">
    <property type="term" value="F:proton-transporting ATP synthase activity, rotational mechanism"/>
    <property type="evidence" value="ECO:0007669"/>
    <property type="project" value="TreeGrafter"/>
</dbReference>
<dbReference type="GO" id="GO:0042776">
    <property type="term" value="P:proton motive force-driven mitochondrial ATP synthesis"/>
    <property type="evidence" value="ECO:0007669"/>
    <property type="project" value="TreeGrafter"/>
</dbReference>
<dbReference type="CDD" id="cd18110">
    <property type="entry name" value="ATP-synt_F1_beta_C"/>
    <property type="match status" value="1"/>
</dbReference>
<dbReference type="FunFam" id="1.10.1140.10:FF:000001">
    <property type="entry name" value="ATP synthase subunit beta"/>
    <property type="match status" value="1"/>
</dbReference>
<dbReference type="Gene3D" id="1.10.1140.10">
    <property type="entry name" value="Bovine Mitochondrial F1-atpase, Atp Synthase Beta Chain, Chain D, domain 3"/>
    <property type="match status" value="1"/>
</dbReference>
<dbReference type="Gene3D" id="3.40.50.300">
    <property type="entry name" value="P-loop containing nucleotide triphosphate hydrolases"/>
    <property type="match status" value="1"/>
</dbReference>
<dbReference type="InterPro" id="IPR055190">
    <property type="entry name" value="ATP-synt_VA_C"/>
</dbReference>
<dbReference type="InterPro" id="IPR050053">
    <property type="entry name" value="ATPase_alpha/beta_chains"/>
</dbReference>
<dbReference type="InterPro" id="IPR000194">
    <property type="entry name" value="ATPase_F1/V1/A1_a/bsu_nucl-bd"/>
</dbReference>
<dbReference type="InterPro" id="IPR024034">
    <property type="entry name" value="ATPase_F1/V1_b/a_C"/>
</dbReference>
<dbReference type="InterPro" id="IPR027417">
    <property type="entry name" value="P-loop_NTPase"/>
</dbReference>
<dbReference type="PANTHER" id="PTHR15184">
    <property type="entry name" value="ATP SYNTHASE"/>
    <property type="match status" value="1"/>
</dbReference>
<dbReference type="PANTHER" id="PTHR15184:SF71">
    <property type="entry name" value="ATP SYNTHASE SUBUNIT BETA, MITOCHONDRIAL"/>
    <property type="match status" value="1"/>
</dbReference>
<dbReference type="Pfam" id="PF00006">
    <property type="entry name" value="ATP-synt_ab"/>
    <property type="match status" value="1"/>
</dbReference>
<dbReference type="Pfam" id="PF22919">
    <property type="entry name" value="ATP-synt_VA_C"/>
    <property type="match status" value="1"/>
</dbReference>
<dbReference type="SUPFAM" id="SSF47917">
    <property type="entry name" value="C-terminal domain of alpha and beta subunits of F1 ATP synthase"/>
    <property type="match status" value="1"/>
</dbReference>
<dbReference type="SUPFAM" id="SSF52540">
    <property type="entry name" value="P-loop containing nucleoside triphosphate hydrolases"/>
    <property type="match status" value="1"/>
</dbReference>
<keyword id="KW-0066">ATP synthesis</keyword>
<keyword id="KW-0067">ATP-binding</keyword>
<keyword id="KW-0139">CF(1)</keyword>
<keyword id="KW-0150">Chloroplast</keyword>
<keyword id="KW-0375">Hydrogen ion transport</keyword>
<keyword id="KW-0406">Ion transport</keyword>
<keyword id="KW-0472">Membrane</keyword>
<keyword id="KW-0547">Nucleotide-binding</keyword>
<keyword id="KW-0934">Plastid</keyword>
<keyword id="KW-0793">Thylakoid</keyword>
<keyword id="KW-1278">Translocase</keyword>
<keyword id="KW-0813">Transport</keyword>
<gene>
    <name type="primary">atpB</name>
</gene>
<evidence type="ECO:0000250" key="1"/>
<evidence type="ECO:0000305" key="2"/>
<sequence length="220" mass="24142">EXFRDVNKQDVLLFIDNILRSVQAGSEVSALLGRMPSAVGYQPTLSTEMGSLQERITSTKEGSITSIQAVYVPADDSTDPAPATTFAHPDATTVLPRGLAAKGIYPAVDPLDPTPTMLQPWIVGEEHYETAQGVKQTLQRYKEPQDIIAILGLDELSEEDRLTVARARKIERFLSQPFFVAEVFTGSPGKYVSPIETIKGFQMILSGELDSLPEQAFYLV</sequence>
<protein>
    <recommendedName>
        <fullName>ATP synthase subunit beta, chloroplastic</fullName>
        <ecNumber>7.1.2.2</ecNumber>
    </recommendedName>
    <alternativeName>
        <fullName>ATP synthase F1 sector subunit beta</fullName>
    </alternativeName>
    <alternativeName>
        <fullName>F-ATPase subunit beta</fullName>
    </alternativeName>
</protein>
<proteinExistence type="inferred from homology"/>
<name>ATPB_OSMCI</name>
<feature type="chain" id="PRO_0000144538" description="ATP synthase subunit beta, chloroplastic">
    <location>
        <begin position="1" status="less than"/>
        <end position="220" status="greater than"/>
    </location>
</feature>
<feature type="non-terminal residue">
    <location>
        <position position="1"/>
    </location>
</feature>
<feature type="non-terminal residue">
    <location>
        <position position="220"/>
    </location>
</feature>